<dbReference type="EMBL" id="J03507">
    <property type="protein sequence ID" value="AAA51861.1"/>
    <property type="molecule type" value="mRNA"/>
</dbReference>
<dbReference type="EMBL" id="AK290349">
    <property type="protein sequence ID" value="BAF83038.1"/>
    <property type="molecule type" value="mRNA"/>
</dbReference>
<dbReference type="EMBL" id="BC063851">
    <property type="protein sequence ID" value="AAH63851.1"/>
    <property type="molecule type" value="mRNA"/>
</dbReference>
<dbReference type="EMBL" id="X86328">
    <property type="protein sequence ID" value="CAA60121.1"/>
    <property type="molecule type" value="Genomic_DNA"/>
</dbReference>
<dbReference type="EMBL" id="X86329">
    <property type="protein sequence ID" value="CAA60121.1"/>
    <property type="status" value="JOINED"/>
    <property type="molecule type" value="Genomic_DNA"/>
</dbReference>
<dbReference type="EMBL" id="X86330">
    <property type="protein sequence ID" value="CAA60121.1"/>
    <property type="status" value="JOINED"/>
    <property type="molecule type" value="Genomic_DNA"/>
</dbReference>
<dbReference type="EMBL" id="X86331">
    <property type="protein sequence ID" value="CAA60121.1"/>
    <property type="status" value="JOINED"/>
    <property type="molecule type" value="Genomic_DNA"/>
</dbReference>
<dbReference type="EMBL" id="X86332">
    <property type="protein sequence ID" value="CAA60121.1"/>
    <property type="status" value="JOINED"/>
    <property type="molecule type" value="Genomic_DNA"/>
</dbReference>
<dbReference type="EMBL" id="X86333">
    <property type="protein sequence ID" value="CAA60121.1"/>
    <property type="status" value="JOINED"/>
    <property type="molecule type" value="Genomic_DNA"/>
</dbReference>
<dbReference type="EMBL" id="X86334">
    <property type="protein sequence ID" value="CAA60121.1"/>
    <property type="status" value="JOINED"/>
    <property type="molecule type" value="Genomic_DNA"/>
</dbReference>
<dbReference type="EMBL" id="X86335">
    <property type="protein sequence ID" value="CAA60121.1"/>
    <property type="status" value="JOINED"/>
    <property type="molecule type" value="Genomic_DNA"/>
</dbReference>
<dbReference type="EMBL" id="X86336">
    <property type="protein sequence ID" value="CAA60121.1"/>
    <property type="status" value="JOINED"/>
    <property type="molecule type" value="Genomic_DNA"/>
</dbReference>
<dbReference type="EMBL" id="X86337">
    <property type="protein sequence ID" value="CAA60121.1"/>
    <property type="status" value="JOINED"/>
    <property type="molecule type" value="Genomic_DNA"/>
</dbReference>
<dbReference type="EMBL" id="X86338">
    <property type="protein sequence ID" value="CAA60121.1"/>
    <property type="status" value="JOINED"/>
    <property type="molecule type" value="Genomic_DNA"/>
</dbReference>
<dbReference type="EMBL" id="X86339">
    <property type="protein sequence ID" value="CAA60121.1"/>
    <property type="status" value="JOINED"/>
    <property type="molecule type" value="Genomic_DNA"/>
</dbReference>
<dbReference type="EMBL" id="X86340">
    <property type="protein sequence ID" value="CAA60121.1"/>
    <property type="status" value="JOINED"/>
    <property type="molecule type" value="Genomic_DNA"/>
</dbReference>
<dbReference type="EMBL" id="X86341">
    <property type="protein sequence ID" value="CAA60121.1"/>
    <property type="status" value="JOINED"/>
    <property type="molecule type" value="Genomic_DNA"/>
</dbReference>
<dbReference type="EMBL" id="X86342">
    <property type="protein sequence ID" value="CAA60121.1"/>
    <property type="status" value="JOINED"/>
    <property type="molecule type" value="Genomic_DNA"/>
</dbReference>
<dbReference type="EMBL" id="X86343">
    <property type="protein sequence ID" value="CAA60121.1"/>
    <property type="status" value="JOINED"/>
    <property type="molecule type" value="Genomic_DNA"/>
</dbReference>
<dbReference type="EMBL" id="X86344">
    <property type="protein sequence ID" value="CAA60121.1"/>
    <property type="status" value="JOINED"/>
    <property type="molecule type" value="Genomic_DNA"/>
</dbReference>
<dbReference type="CCDS" id="CCDS47201.1"/>
<dbReference type="PIR" id="A27340">
    <property type="entry name" value="A27340"/>
</dbReference>
<dbReference type="RefSeq" id="NP_000578.2">
    <property type="nucleotide sequence ID" value="NM_000587.3"/>
</dbReference>
<dbReference type="PDB" id="2WCY">
    <property type="method" value="NMR"/>
    <property type="chains" value="A=693-843"/>
</dbReference>
<dbReference type="PDB" id="6H03">
    <property type="method" value="EM"/>
    <property type="resolution" value="5.60 A"/>
    <property type="chains" value="D=23-843"/>
</dbReference>
<dbReference type="PDB" id="6H04">
    <property type="method" value="EM"/>
    <property type="resolution" value="5.60 A"/>
    <property type="chains" value="D=23-843"/>
</dbReference>
<dbReference type="PDB" id="7NYC">
    <property type="method" value="EM"/>
    <property type="resolution" value="3.50 A"/>
    <property type="chains" value="C=23-843"/>
</dbReference>
<dbReference type="PDB" id="7NYD">
    <property type="method" value="EM"/>
    <property type="resolution" value="3.30 A"/>
    <property type="chains" value="C=23-843"/>
</dbReference>
<dbReference type="PDB" id="8B0F">
    <property type="method" value="EM"/>
    <property type="resolution" value="3.00 A"/>
    <property type="chains" value="C=1-843"/>
</dbReference>
<dbReference type="PDB" id="8B0G">
    <property type="method" value="EM"/>
    <property type="resolution" value="3.30 A"/>
    <property type="chains" value="C=1-843"/>
</dbReference>
<dbReference type="PDB" id="8B0H">
    <property type="method" value="EM"/>
    <property type="resolution" value="3.30 A"/>
    <property type="chains" value="C=1-843"/>
</dbReference>
<dbReference type="PDBsum" id="2WCY"/>
<dbReference type="PDBsum" id="6H03"/>
<dbReference type="PDBsum" id="6H04"/>
<dbReference type="PDBsum" id="7NYC"/>
<dbReference type="PDBsum" id="7NYD"/>
<dbReference type="PDBsum" id="8B0F"/>
<dbReference type="PDBsum" id="8B0G"/>
<dbReference type="PDBsum" id="8B0H"/>
<dbReference type="BMRB" id="P10643"/>
<dbReference type="EMDB" id="EMD-0106"/>
<dbReference type="EMDB" id="EMD-0107"/>
<dbReference type="EMDB" id="EMD-12649"/>
<dbReference type="EMDB" id="EMD-12650"/>
<dbReference type="EMDB" id="EMD-12651"/>
<dbReference type="EMDB" id="EMD-15779"/>
<dbReference type="EMDB" id="EMD-15780"/>
<dbReference type="EMDB" id="EMD-15781"/>
<dbReference type="EMDB" id="EMD-3289"/>
<dbReference type="SMR" id="P10643"/>
<dbReference type="BioGRID" id="107191">
    <property type="interactions" value="8"/>
</dbReference>
<dbReference type="ComplexPortal" id="CPX-6159">
    <property type="entry name" value="Membrane attack complex"/>
</dbReference>
<dbReference type="FunCoup" id="P10643">
    <property type="interactions" value="110"/>
</dbReference>
<dbReference type="IntAct" id="P10643">
    <property type="interactions" value="7"/>
</dbReference>
<dbReference type="MINT" id="P10643"/>
<dbReference type="STRING" id="9606.ENSP00000322061"/>
<dbReference type="GlyConnect" id="807">
    <property type="glycosylation" value="2 N-Linked glycans (2 sites), 1 O-Linked glycan (1 site)"/>
</dbReference>
<dbReference type="GlyCosmos" id="P10643">
    <property type="glycosylation" value="7 sites, 5 glycans"/>
</dbReference>
<dbReference type="GlyGen" id="P10643">
    <property type="glycosylation" value="9 sites, 33 N-linked glycans (2 sites), 3 O-linked glycans (2 sites)"/>
</dbReference>
<dbReference type="iPTMnet" id="P10643"/>
<dbReference type="PhosphoSitePlus" id="P10643"/>
<dbReference type="SwissPalm" id="P10643"/>
<dbReference type="BioMuta" id="C7"/>
<dbReference type="DMDM" id="61252057"/>
<dbReference type="CPTAC" id="non-CPTAC-2655"/>
<dbReference type="jPOST" id="P10643"/>
<dbReference type="MassIVE" id="P10643"/>
<dbReference type="PaxDb" id="9606-ENSP00000322061"/>
<dbReference type="PeptideAtlas" id="P10643"/>
<dbReference type="ProteomicsDB" id="52633"/>
<dbReference type="Antibodypedia" id="709">
    <property type="antibodies" value="327 antibodies from 36 providers"/>
</dbReference>
<dbReference type="DNASU" id="730"/>
<dbReference type="Ensembl" id="ENST00000313164.10">
    <property type="protein sequence ID" value="ENSP00000322061.9"/>
    <property type="gene ID" value="ENSG00000112936.21"/>
</dbReference>
<dbReference type="Ensembl" id="ENST00000696333.1">
    <property type="protein sequence ID" value="ENSP00000512566.1"/>
    <property type="gene ID" value="ENSG00000112936.21"/>
</dbReference>
<dbReference type="GeneID" id="730"/>
<dbReference type="KEGG" id="hsa:730"/>
<dbReference type="MANE-Select" id="ENST00000313164.10">
    <property type="protein sequence ID" value="ENSP00000322061.9"/>
    <property type="RefSeq nucleotide sequence ID" value="NM_000587.4"/>
    <property type="RefSeq protein sequence ID" value="NP_000578.2"/>
</dbReference>
<dbReference type="UCSC" id="uc003jmh.5">
    <property type="organism name" value="human"/>
</dbReference>
<dbReference type="AGR" id="HGNC:1346"/>
<dbReference type="CTD" id="730"/>
<dbReference type="DisGeNET" id="730"/>
<dbReference type="GeneCards" id="C7"/>
<dbReference type="HGNC" id="HGNC:1346">
    <property type="gene designation" value="C7"/>
</dbReference>
<dbReference type="HPA" id="ENSG00000112936">
    <property type="expression patterns" value="Tissue enhanced (adrenal)"/>
</dbReference>
<dbReference type="MalaCards" id="C7"/>
<dbReference type="MIM" id="217070">
    <property type="type" value="gene"/>
</dbReference>
<dbReference type="MIM" id="610102">
    <property type="type" value="phenotype"/>
</dbReference>
<dbReference type="neXtProt" id="NX_P10643"/>
<dbReference type="OpenTargets" id="ENSG00000112936"/>
<dbReference type="Orphanet" id="169150">
    <property type="disease" value="Immunodeficiency due to a late component of complement deficiency"/>
</dbReference>
<dbReference type="PharmGKB" id="PA25941"/>
<dbReference type="VEuPathDB" id="HostDB:ENSG00000112936"/>
<dbReference type="eggNOG" id="ENOG502QU3G">
    <property type="taxonomic scope" value="Eukaryota"/>
</dbReference>
<dbReference type="GeneTree" id="ENSGT00940000156804"/>
<dbReference type="HOGENOM" id="CLU_014082_0_0_1"/>
<dbReference type="InParanoid" id="P10643"/>
<dbReference type="OMA" id="CQNGGQP"/>
<dbReference type="OrthoDB" id="504708at2759"/>
<dbReference type="PAN-GO" id="P10643">
    <property type="GO annotations" value="3 GO annotations based on evolutionary models"/>
</dbReference>
<dbReference type="PhylomeDB" id="P10643"/>
<dbReference type="TreeFam" id="TF330498"/>
<dbReference type="PathwayCommons" id="P10643"/>
<dbReference type="Reactome" id="R-HSA-166665">
    <property type="pathway name" value="Terminal pathway of complement"/>
</dbReference>
<dbReference type="Reactome" id="R-HSA-977606">
    <property type="pathway name" value="Regulation of Complement cascade"/>
</dbReference>
<dbReference type="SignaLink" id="P10643"/>
<dbReference type="SIGNOR" id="P10643"/>
<dbReference type="BioGRID-ORCS" id="730">
    <property type="hits" value="13 hits in 1149 CRISPR screens"/>
</dbReference>
<dbReference type="ChiTaRS" id="C7">
    <property type="organism name" value="human"/>
</dbReference>
<dbReference type="EvolutionaryTrace" id="P10643"/>
<dbReference type="GenomeRNAi" id="730"/>
<dbReference type="Pharos" id="P10643">
    <property type="development level" value="Tbio"/>
</dbReference>
<dbReference type="PRO" id="PR:P10643"/>
<dbReference type="Proteomes" id="UP000005640">
    <property type="component" value="Chromosome 5"/>
</dbReference>
<dbReference type="RNAct" id="P10643">
    <property type="molecule type" value="protein"/>
</dbReference>
<dbReference type="Bgee" id="ENSG00000112936">
    <property type="expression patterns" value="Expressed in right ovary and 168 other cell types or tissues"/>
</dbReference>
<dbReference type="GO" id="GO:0070062">
    <property type="term" value="C:extracellular exosome"/>
    <property type="evidence" value="ECO:0007005"/>
    <property type="project" value="UniProtKB"/>
</dbReference>
<dbReference type="GO" id="GO:0005576">
    <property type="term" value="C:extracellular region"/>
    <property type="evidence" value="ECO:0000304"/>
    <property type="project" value="Reactome"/>
</dbReference>
<dbReference type="GO" id="GO:0005615">
    <property type="term" value="C:extracellular space"/>
    <property type="evidence" value="ECO:0000318"/>
    <property type="project" value="GO_Central"/>
</dbReference>
<dbReference type="GO" id="GO:0005579">
    <property type="term" value="C:membrane attack complex"/>
    <property type="evidence" value="ECO:0000314"/>
    <property type="project" value="UniProtKB"/>
</dbReference>
<dbReference type="GO" id="GO:0005886">
    <property type="term" value="C:plasma membrane"/>
    <property type="evidence" value="ECO:0000303"/>
    <property type="project" value="ComplexPortal"/>
</dbReference>
<dbReference type="GO" id="GO:0006956">
    <property type="term" value="P:complement activation"/>
    <property type="evidence" value="ECO:0000318"/>
    <property type="project" value="GO_Central"/>
</dbReference>
<dbReference type="GO" id="GO:0006957">
    <property type="term" value="P:complement activation, alternative pathway"/>
    <property type="evidence" value="ECO:0007669"/>
    <property type="project" value="UniProtKB-KW"/>
</dbReference>
<dbReference type="GO" id="GO:0006958">
    <property type="term" value="P:complement activation, classical pathway"/>
    <property type="evidence" value="ECO:0007669"/>
    <property type="project" value="UniProtKB-KW"/>
</dbReference>
<dbReference type="GO" id="GO:0031640">
    <property type="term" value="P:killing of cells of another organism"/>
    <property type="evidence" value="ECO:0007669"/>
    <property type="project" value="UniProtKB-KW"/>
</dbReference>
<dbReference type="GO" id="GO:0050778">
    <property type="term" value="P:positive regulation of immune response"/>
    <property type="evidence" value="ECO:0000303"/>
    <property type="project" value="ComplexPortal"/>
</dbReference>
<dbReference type="CDD" id="cd00033">
    <property type="entry name" value="CCP"/>
    <property type="match status" value="2"/>
</dbReference>
<dbReference type="CDD" id="cd00112">
    <property type="entry name" value="LDLa"/>
    <property type="match status" value="1"/>
</dbReference>
<dbReference type="FunFam" id="2.10.70.10:FF:000075">
    <property type="entry name" value="Complement component C7"/>
    <property type="match status" value="1"/>
</dbReference>
<dbReference type="FunFam" id="2.10.70.10:FF:000077">
    <property type="entry name" value="Complement component C7"/>
    <property type="match status" value="1"/>
</dbReference>
<dbReference type="FunFam" id="3.30.60.30:FF:000053">
    <property type="entry name" value="Complement component C7"/>
    <property type="match status" value="1"/>
</dbReference>
<dbReference type="FunFam" id="3.30.60.30:FF:000095">
    <property type="entry name" value="Complement component C7"/>
    <property type="match status" value="1"/>
</dbReference>
<dbReference type="FunFam" id="4.10.400.10:FF:000099">
    <property type="entry name" value="Complement component C7"/>
    <property type="match status" value="1"/>
</dbReference>
<dbReference type="FunFam" id="2.20.100.10:FF:000002">
    <property type="entry name" value="Unc-5 netrin receptor C"/>
    <property type="match status" value="1"/>
</dbReference>
<dbReference type="Gene3D" id="3.30.60.30">
    <property type="match status" value="2"/>
</dbReference>
<dbReference type="Gene3D" id="2.10.70.10">
    <property type="entry name" value="Complement Module, domain 1"/>
    <property type="match status" value="2"/>
</dbReference>
<dbReference type="Gene3D" id="4.10.400.10">
    <property type="entry name" value="Low-density Lipoprotein Receptor"/>
    <property type="match status" value="1"/>
</dbReference>
<dbReference type="Gene3D" id="2.20.100.10">
    <property type="entry name" value="Thrombospondin type-1 (TSP1) repeat"/>
    <property type="match status" value="2"/>
</dbReference>
<dbReference type="InterPro" id="IPR048827">
    <property type="entry name" value="C7_FIM2_N"/>
</dbReference>
<dbReference type="InterPro" id="IPR048825">
    <property type="entry name" value="C7_KAZAL"/>
</dbReference>
<dbReference type="InterPro" id="IPR003884">
    <property type="entry name" value="FacI_MAC"/>
</dbReference>
<dbReference type="InterPro" id="IPR040729">
    <property type="entry name" value="Kazal_3"/>
</dbReference>
<dbReference type="InterPro" id="IPR036055">
    <property type="entry name" value="LDL_receptor-like_sf"/>
</dbReference>
<dbReference type="InterPro" id="IPR023415">
    <property type="entry name" value="LDLR_class-A_CS"/>
</dbReference>
<dbReference type="InterPro" id="IPR002172">
    <property type="entry name" value="LDrepeatLR_classA_rpt"/>
</dbReference>
<dbReference type="InterPro" id="IPR001862">
    <property type="entry name" value="MAC_perforin"/>
</dbReference>
<dbReference type="InterPro" id="IPR020864">
    <property type="entry name" value="MACPF"/>
</dbReference>
<dbReference type="InterPro" id="IPR020863">
    <property type="entry name" value="MACPF_CS"/>
</dbReference>
<dbReference type="InterPro" id="IPR035976">
    <property type="entry name" value="Sushi/SCR/CCP_sf"/>
</dbReference>
<dbReference type="InterPro" id="IPR000436">
    <property type="entry name" value="Sushi_SCR_CCP_dom"/>
</dbReference>
<dbReference type="InterPro" id="IPR000884">
    <property type="entry name" value="TSP1_rpt"/>
</dbReference>
<dbReference type="InterPro" id="IPR036383">
    <property type="entry name" value="TSP1_rpt_sf"/>
</dbReference>
<dbReference type="PANTHER" id="PTHR45742">
    <property type="entry name" value="COMPLEMENT COMPONENT C6"/>
    <property type="match status" value="1"/>
</dbReference>
<dbReference type="PANTHER" id="PTHR45742:SF2">
    <property type="entry name" value="COMPLEMENT COMPONENT C7"/>
    <property type="match status" value="1"/>
</dbReference>
<dbReference type="Pfam" id="PF21284">
    <property type="entry name" value="C7_FIM2_N"/>
    <property type="match status" value="1"/>
</dbReference>
<dbReference type="Pfam" id="PF18434">
    <property type="entry name" value="Kazal_3"/>
    <property type="match status" value="1"/>
</dbReference>
<dbReference type="Pfam" id="PF21330">
    <property type="entry name" value="Kazal_C7"/>
    <property type="match status" value="1"/>
</dbReference>
<dbReference type="Pfam" id="PF00057">
    <property type="entry name" value="Ldl_recept_a"/>
    <property type="match status" value="1"/>
</dbReference>
<dbReference type="Pfam" id="PF01823">
    <property type="entry name" value="MACPF"/>
    <property type="match status" value="1"/>
</dbReference>
<dbReference type="Pfam" id="PF00084">
    <property type="entry name" value="Sushi"/>
    <property type="match status" value="2"/>
</dbReference>
<dbReference type="Pfam" id="PF00090">
    <property type="entry name" value="TSP_1"/>
    <property type="match status" value="2"/>
</dbReference>
<dbReference type="PRINTS" id="PR00764">
    <property type="entry name" value="COMPLEMENTC9"/>
</dbReference>
<dbReference type="PRINTS" id="PR01705">
    <property type="entry name" value="TSP1REPEAT"/>
</dbReference>
<dbReference type="SMART" id="SM00032">
    <property type="entry name" value="CCP"/>
    <property type="match status" value="2"/>
</dbReference>
<dbReference type="SMART" id="SM00057">
    <property type="entry name" value="FIMAC"/>
    <property type="match status" value="2"/>
</dbReference>
<dbReference type="SMART" id="SM00192">
    <property type="entry name" value="LDLa"/>
    <property type="match status" value="1"/>
</dbReference>
<dbReference type="SMART" id="SM00457">
    <property type="entry name" value="MACPF"/>
    <property type="match status" value="1"/>
</dbReference>
<dbReference type="SMART" id="SM00209">
    <property type="entry name" value="TSP1"/>
    <property type="match status" value="2"/>
</dbReference>
<dbReference type="SUPFAM" id="SSF57535">
    <property type="entry name" value="Complement control module/SCR domain"/>
    <property type="match status" value="2"/>
</dbReference>
<dbReference type="SUPFAM" id="SSF82895">
    <property type="entry name" value="TSP-1 type 1 repeat"/>
    <property type="match status" value="2"/>
</dbReference>
<dbReference type="PROSITE" id="PS00022">
    <property type="entry name" value="EGF_1"/>
    <property type="match status" value="1"/>
</dbReference>
<dbReference type="PROSITE" id="PS01186">
    <property type="entry name" value="EGF_2"/>
    <property type="match status" value="1"/>
</dbReference>
<dbReference type="PROSITE" id="PS01209">
    <property type="entry name" value="LDLRA_1"/>
    <property type="match status" value="1"/>
</dbReference>
<dbReference type="PROSITE" id="PS50068">
    <property type="entry name" value="LDLRA_2"/>
    <property type="match status" value="1"/>
</dbReference>
<dbReference type="PROSITE" id="PS00279">
    <property type="entry name" value="MACPF_1"/>
    <property type="match status" value="1"/>
</dbReference>
<dbReference type="PROSITE" id="PS51412">
    <property type="entry name" value="MACPF_2"/>
    <property type="match status" value="1"/>
</dbReference>
<dbReference type="PROSITE" id="PS50923">
    <property type="entry name" value="SUSHI"/>
    <property type="match status" value="2"/>
</dbReference>
<dbReference type="PROSITE" id="PS50092">
    <property type="entry name" value="TSP1"/>
    <property type="match status" value="2"/>
</dbReference>
<evidence type="ECO:0000255" key="1">
    <source>
        <dbReference type="PROSITE-ProRule" id="PRU00124"/>
    </source>
</evidence>
<evidence type="ECO:0000255" key="2">
    <source>
        <dbReference type="PROSITE-ProRule" id="PRU00210"/>
    </source>
</evidence>
<evidence type="ECO:0000255" key="3">
    <source>
        <dbReference type="PROSITE-ProRule" id="PRU00302"/>
    </source>
</evidence>
<evidence type="ECO:0000255" key="4">
    <source>
        <dbReference type="PROSITE-ProRule" id="PRU00745"/>
    </source>
</evidence>
<evidence type="ECO:0000256" key="5">
    <source>
        <dbReference type="SAM" id="MobiDB-lite"/>
    </source>
</evidence>
<evidence type="ECO:0000269" key="6">
    <source>
    </source>
</evidence>
<evidence type="ECO:0000269" key="7">
    <source>
    </source>
</evidence>
<evidence type="ECO:0000269" key="8">
    <source>
    </source>
</evidence>
<evidence type="ECO:0000269" key="9">
    <source>
    </source>
</evidence>
<evidence type="ECO:0000269" key="10">
    <source>
    </source>
</evidence>
<evidence type="ECO:0000269" key="11">
    <source>
    </source>
</evidence>
<evidence type="ECO:0000269" key="12">
    <source>
    </source>
</evidence>
<evidence type="ECO:0000269" key="13">
    <source>
    </source>
</evidence>
<evidence type="ECO:0000269" key="14">
    <source>
    </source>
</evidence>
<evidence type="ECO:0000269" key="15">
    <source>
    </source>
</evidence>
<evidence type="ECO:0000269" key="16">
    <source>
    </source>
</evidence>
<evidence type="ECO:0000269" key="17">
    <source>
    </source>
</evidence>
<evidence type="ECO:0000269" key="18">
    <source>
    </source>
</evidence>
<evidence type="ECO:0000269" key="19">
    <source>
    </source>
</evidence>
<evidence type="ECO:0000269" key="20">
    <source>
    </source>
</evidence>
<evidence type="ECO:0000269" key="21">
    <source>
    </source>
</evidence>
<evidence type="ECO:0000269" key="22">
    <source>
    </source>
</evidence>
<evidence type="ECO:0000269" key="23">
    <source>
    </source>
</evidence>
<evidence type="ECO:0000269" key="24">
    <source>
    </source>
</evidence>
<evidence type="ECO:0000269" key="25">
    <source>
    </source>
</evidence>
<evidence type="ECO:0000269" key="26">
    <source>
    </source>
</evidence>
<evidence type="ECO:0000303" key="27">
    <source>
    </source>
</evidence>
<evidence type="ECO:0000305" key="28"/>
<evidence type="ECO:0000305" key="29">
    <source>
    </source>
</evidence>
<evidence type="ECO:0000312" key="30">
    <source>
        <dbReference type="HGNC" id="HGNC:1346"/>
    </source>
</evidence>
<evidence type="ECO:0007744" key="31">
    <source>
        <dbReference type="PDB" id="2WCY"/>
    </source>
</evidence>
<evidence type="ECO:0007744" key="32">
    <source>
        <dbReference type="PDB" id="6H03"/>
    </source>
</evidence>
<evidence type="ECO:0007744" key="33">
    <source>
        <dbReference type="PDB" id="6H04"/>
    </source>
</evidence>
<evidence type="ECO:0007744" key="34">
    <source>
        <dbReference type="PDB" id="7NYC"/>
    </source>
</evidence>
<evidence type="ECO:0007744" key="35">
    <source>
        <dbReference type="PDB" id="7NYD"/>
    </source>
</evidence>
<evidence type="ECO:0007744" key="36">
    <source>
        <dbReference type="PDB" id="8B0F"/>
    </source>
</evidence>
<evidence type="ECO:0007744" key="37">
    <source>
        <dbReference type="PDB" id="8B0G"/>
    </source>
</evidence>
<evidence type="ECO:0007744" key="38">
    <source>
        <dbReference type="PDB" id="8B0H"/>
    </source>
</evidence>
<evidence type="ECO:0007829" key="39">
    <source>
        <dbReference type="PDB" id="2WCY"/>
    </source>
</evidence>
<evidence type="ECO:0007829" key="40">
    <source>
        <dbReference type="PDB" id="7NYD"/>
    </source>
</evidence>
<organism>
    <name type="scientific">Homo sapiens</name>
    <name type="common">Human</name>
    <dbReference type="NCBI Taxonomy" id="9606"/>
    <lineage>
        <taxon>Eukaryota</taxon>
        <taxon>Metazoa</taxon>
        <taxon>Chordata</taxon>
        <taxon>Craniata</taxon>
        <taxon>Vertebrata</taxon>
        <taxon>Euteleostomi</taxon>
        <taxon>Mammalia</taxon>
        <taxon>Eutheria</taxon>
        <taxon>Euarchontoglires</taxon>
        <taxon>Primates</taxon>
        <taxon>Haplorrhini</taxon>
        <taxon>Catarrhini</taxon>
        <taxon>Hominidae</taxon>
        <taxon>Homo</taxon>
    </lineage>
</organism>
<protein>
    <recommendedName>
        <fullName evidence="28">Complement component C7</fullName>
    </recommendedName>
</protein>
<name>CO7_HUMAN</name>
<accession>P10643</accession>
<accession>A8K2T4</accession>
<accession>Q6P3T5</accession>
<accession>Q92489</accession>
<keyword id="KW-0002">3D-structure</keyword>
<keyword id="KW-0179">Complement alternate pathway</keyword>
<keyword id="KW-0180">Complement pathway</keyword>
<keyword id="KW-0204">Cytolysis</keyword>
<keyword id="KW-0903">Direct protein sequencing</keyword>
<keyword id="KW-0225">Disease variant</keyword>
<keyword id="KW-1015">Disulfide bond</keyword>
<keyword id="KW-0245">EGF-like domain</keyword>
<keyword id="KW-0325">Glycoprotein</keyword>
<keyword id="KW-0391">Immunity</keyword>
<keyword id="KW-0399">Innate immunity</keyword>
<keyword id="KW-0472">Membrane</keyword>
<keyword id="KW-0473">Membrane attack complex</keyword>
<keyword id="KW-1267">Proteomics identification</keyword>
<keyword id="KW-1185">Reference proteome</keyword>
<keyword id="KW-0677">Repeat</keyword>
<keyword id="KW-0964">Secreted</keyword>
<keyword id="KW-0732">Signal</keyword>
<keyword id="KW-0768">Sushi</keyword>
<keyword id="KW-1052">Target cell membrane</keyword>
<keyword id="KW-1053">Target membrane</keyword>
<sequence length="843" mass="93518">MKVISLFILVGFIGEFQSFSSASSPVNCQWDFYAPWSECNGCTKTQTRRRSVAVYGQYGGQPCVGNAFETQSCEPTRGCPTEEGCGERFRCFSGQCISKSLVCNGDSDCDEDSADEDRCEDSERRPSCDIDKPPPNIELTGNGYNELTGQFRNRVINTKSFGGQCRKVFSGDGKDFYRLSGNVLSYTFQVKINNDFNYEFYNSTWSYVKHTSTEHTSSSRKRSFFRSSSSSSRSYTSHTNEIHKGKSYQLLVVENTVEVAQFINNNPEFLQLAEPFWKELSHLPSLYDYSAYRRLIDQYGTHYLQSGSLGGEYRVLFYVDSEKLKQNDFNSVEEKKCKSSGWHFVVKFSSHGCKELENALKAASGTQNNVLRGEPFIRGGGAGFISGLSYLELDNPAGNKRRYSAWAESVTNLPQVIKQKLTPLYELVKEVPCASVKKLYLKWALEEYLDEFDPCHCRPCQNGGLATVEGTHCLCHCKPYTFGAACEQGVLVGNQAGGVDGGWSCWSSWSPCVQGKKTRSRECNNPPPSGGGRSCVGETTESTQCEDEELEHLRLLEPHCFPLSLVPTEFCPSPPALKDGFVQDEGTMFPVGKNVVYTCNEGYSLIGNPVARCGEDLRWLVGEMHCQKIACVLPVLMDGIQSHPQKPFYTVGEKVTVSCSGGMSLEGPSAFLCGSSLKWSPEMKNARCVQKENPLTQAVPKCQRWEKLQNSRCVCKMPYECGPSLDVCAQDERSKRILPLTVCKMHVLHCQGRNYTLTGRDSCTLPASAEKACGACPLWGKCDAESSKCVCREASECEEEGFSICVEVNGKEQTMSECEAGALRCRGQSISVTSIRPCAAETQ</sequence>
<feature type="signal peptide" evidence="29">
    <location>
        <begin position="1"/>
        <end position="22"/>
    </location>
</feature>
<feature type="chain" id="PRO_0000023583" description="Complement component C7">
    <location>
        <begin position="23"/>
        <end position="843"/>
    </location>
</feature>
<feature type="domain" description="TSP type-1 1" evidence="2">
    <location>
        <begin position="27"/>
        <end position="80"/>
    </location>
</feature>
<feature type="domain" description="LDL-receptor class A" evidence="1">
    <location>
        <begin position="83"/>
        <end position="121"/>
    </location>
</feature>
<feature type="domain" description="MACPF" evidence="4">
    <location>
        <begin position="124"/>
        <end position="456"/>
    </location>
</feature>
<feature type="domain" description="EGF-like">
    <location>
        <begin position="457"/>
        <end position="487"/>
    </location>
</feature>
<feature type="domain" description="TSP type-1 2" evidence="2">
    <location>
        <begin position="500"/>
        <end position="549"/>
    </location>
</feature>
<feature type="domain" description="Sushi 1" evidence="3">
    <location>
        <begin position="569"/>
        <end position="628"/>
    </location>
</feature>
<feature type="domain" description="Sushi 2" evidence="3">
    <location>
        <begin position="629"/>
        <end position="690"/>
    </location>
</feature>
<feature type="region of interest" description="Disordered" evidence="5">
    <location>
        <begin position="108"/>
        <end position="143"/>
    </location>
</feature>
<feature type="region of interest" description="Disordered" evidence="5">
    <location>
        <begin position="219"/>
        <end position="240"/>
    </location>
</feature>
<feature type="region of interest" description="Disordered" evidence="5">
    <location>
        <begin position="516"/>
        <end position="538"/>
    </location>
</feature>
<feature type="region of interest" description="CCP 1">
    <location>
        <begin position="545"/>
        <end position="615"/>
    </location>
</feature>
<feature type="region of interest" description="CCP 2">
    <location>
        <begin position="616"/>
        <end position="693"/>
    </location>
</feature>
<feature type="region of interest" description="Factor I module (FIM) 1">
    <location>
        <begin position="695"/>
        <end position="770"/>
    </location>
</feature>
<feature type="region of interest" description="Factor I module (FIM) 2">
    <location>
        <begin position="771"/>
        <end position="843"/>
    </location>
</feature>
<feature type="compositionally biased region" description="Acidic residues" evidence="5">
    <location>
        <begin position="108"/>
        <end position="120"/>
    </location>
</feature>
<feature type="compositionally biased region" description="Basic and acidic residues" evidence="5">
    <location>
        <begin position="121"/>
        <end position="132"/>
    </location>
</feature>
<feature type="compositionally biased region" description="Low complexity" evidence="5">
    <location>
        <begin position="225"/>
        <end position="234"/>
    </location>
</feature>
<feature type="glycosylation site" description="C-linked (Man) tryptophan" evidence="6">
    <location>
        <position position="36"/>
    </location>
</feature>
<feature type="glycosylation site" description="N-linked (GlcNAc...) asparagine" evidence="8 9">
    <location>
        <position position="202"/>
    </location>
</feature>
<feature type="glycosylation site" description="C-linked (Man) tryptophan; partial" evidence="6">
    <location>
        <position position="503"/>
    </location>
</feature>
<feature type="glycosylation site" description="C-linked (Man) tryptophan; partial" evidence="6">
    <location>
        <position position="506"/>
    </location>
</feature>
<feature type="glycosylation site" description="C-linked (Man) tryptophan; partial" evidence="6">
    <location>
        <position position="509"/>
    </location>
</feature>
<feature type="glycosylation site" description="O-linked (GalNAc...) threonine" evidence="13">
    <location>
        <position position="696"/>
    </location>
</feature>
<feature type="glycosylation site" description="N-linked (GlcNAc...) (complex) asparagine" evidence="9 10">
    <location>
        <position position="754"/>
    </location>
</feature>
<feature type="disulfide bond" evidence="17 22 32 33 36 37 38">
    <location>
        <begin position="28"/>
        <end position="63"/>
    </location>
</feature>
<feature type="disulfide bond" evidence="17 22 32 33 36 37 38">
    <location>
        <begin position="39"/>
        <end position="73"/>
    </location>
</feature>
<feature type="disulfide bond" evidence="17 22 32 33 36 37 38">
    <location>
        <begin position="42"/>
        <end position="79"/>
    </location>
</feature>
<feature type="disulfide bond" evidence="17 22 32 33 36 37 38">
    <location>
        <begin position="85"/>
        <end position="96"/>
    </location>
</feature>
<feature type="disulfide bond" evidence="17 22 32 33 36 37 38">
    <location>
        <begin position="91"/>
        <end position="109"/>
    </location>
</feature>
<feature type="disulfide bond" evidence="17 22 32 33 36 37 38">
    <location>
        <begin position="103"/>
        <end position="119"/>
    </location>
</feature>
<feature type="disulfide bond" evidence="22 36 37 38">
    <location>
        <begin position="128"/>
        <end position="165"/>
    </location>
</feature>
<feature type="disulfide bond" evidence="11 17 22 31 33 36 37 38">
    <location>
        <begin position="337"/>
        <end position="353"/>
    </location>
</feature>
<feature type="disulfide bond" evidence="17 22 34 35 36 37 38">
    <location>
        <begin position="433"/>
        <end position="560"/>
    </location>
</feature>
<feature type="disulfide bond" evidence="17 22 32 33 36 37 38">
    <location>
        <begin position="455"/>
        <end position="505"/>
    </location>
</feature>
<feature type="disulfide bond" evidence="17 22 32 36 37 38">
    <location>
        <begin position="457"/>
        <end position="473"/>
    </location>
</feature>
<feature type="disulfide bond" evidence="17 22 32 33 36 37 38">
    <location>
        <begin position="460"/>
        <end position="475"/>
    </location>
</feature>
<feature type="disulfide bond" evidence="17 22 32 33 36 37 38">
    <location>
        <begin position="477"/>
        <end position="486"/>
    </location>
</feature>
<feature type="disulfide bond" evidence="17 22 32 33 36 37 38">
    <location>
        <begin position="512"/>
        <end position="545"/>
    </location>
</feature>
<feature type="disulfide bond" evidence="22 34 35 36 37 38">
    <location>
        <begin position="523"/>
        <end position="535"/>
    </location>
</feature>
<feature type="disulfide bond" evidence="17 22 32 33 36 37 38">
    <location>
        <begin position="571"/>
        <end position="613"/>
    </location>
</feature>
<feature type="disulfide bond" evidence="22 34 35 36 37 38">
    <location>
        <begin position="599"/>
        <end position="626"/>
    </location>
</feature>
<feature type="disulfide bond" evidence="17 22 32 33 36 37 38">
    <location>
        <begin position="631"/>
        <end position="673"/>
    </location>
</feature>
<feature type="disulfide bond" evidence="17 22 32 36 37 38">
    <location>
        <begin position="659"/>
        <end position="688"/>
    </location>
</feature>
<feature type="disulfide bond" evidence="11 31">
    <location>
        <begin position="702"/>
        <end position="713"/>
    </location>
</feature>
<feature type="disulfide bond" evidence="11 31">
    <location>
        <begin position="715"/>
        <end position="750"/>
    </location>
</feature>
<feature type="disulfide bond" evidence="11 31">
    <location>
        <begin position="721"/>
        <end position="743"/>
    </location>
</feature>
<feature type="disulfide bond" evidence="11 31">
    <location>
        <begin position="728"/>
        <end position="763"/>
    </location>
</feature>
<feature type="disulfide bond" evidence="11 31">
    <location>
        <begin position="773"/>
        <end position="782"/>
    </location>
</feature>
<feature type="disulfide bond" evidence="11 31">
    <location>
        <begin position="776"/>
        <end position="789"/>
    </location>
</feature>
<feature type="disulfide bond" evidence="11 31">
    <location>
        <begin position="791"/>
        <end position="825"/>
    </location>
</feature>
<feature type="disulfide bond" evidence="11 31">
    <location>
        <begin position="797"/>
        <end position="818"/>
    </location>
</feature>
<feature type="disulfide bond" evidence="11 31">
    <location>
        <begin position="805"/>
        <end position="838"/>
    </location>
</feature>
<feature type="sequence variant" id="VAR_050480" description="In dbSNP:rs2271708.">
    <original>C</original>
    <variation>R</variation>
    <location>
        <position position="128"/>
    </location>
</feature>
<feature type="sequence variant" id="VAR_012643" description="In C7D; dbSNP:rs369349760." evidence="26">
    <original>R</original>
    <variation>Q</variation>
    <location>
        <position position="220"/>
    </location>
</feature>
<feature type="sequence variant" id="VAR_081726" description="In dbSNP:rs75345202." evidence="7">
    <original>R</original>
    <variation>H</variation>
    <location>
        <position position="222"/>
    </location>
</feature>
<feature type="sequence variant" id="VAR_012644" description="In C7D; dbSNP:rs121964921." evidence="25">
    <original>G</original>
    <variation>R</variation>
    <location>
        <position position="379"/>
    </location>
</feature>
<feature type="sequence variant" id="VAR_033798" description="Confirmed at protein level; dbSNP:rs1063499." evidence="12 23">
    <original>S</original>
    <variation>T</variation>
    <location>
        <position position="389"/>
    </location>
</feature>
<feature type="sequence variant" id="VAR_022023" description="In dbSNP:rs3792646.">
    <original>K</original>
    <variation>Q</variation>
    <location>
        <position position="420"/>
    </location>
</feature>
<feature type="sequence variant" id="VAR_012645" description="In C7D; dbSNP:rs121964920." evidence="24">
    <original>R</original>
    <variation>S</variation>
    <location>
        <position position="521"/>
    </location>
</feature>
<feature type="sequence variant" id="VAR_033799" description="Confirmed at protein level; dbSNP:rs13157656." evidence="12 20">
    <original>T</original>
    <variation>P</variation>
    <location>
        <position position="587"/>
    </location>
</feature>
<feature type="sequence variant" id="VAR_012646" description="In C7D; dbSNP:rs541873000." evidence="26">
    <original>E</original>
    <variation>Q</variation>
    <location>
        <position position="682"/>
    </location>
</feature>
<feature type="sequence variant" id="VAR_012647" description="In C7D; dbSNP:rs113187203." evidence="26">
    <original>R</original>
    <variation>H</variation>
    <location>
        <position position="687"/>
    </location>
</feature>
<feature type="sequence conflict" description="In Ref. 2; BAF83038." evidence="28" ref="2">
    <original>S</original>
    <variation>G</variation>
    <location>
        <position position="18"/>
    </location>
</feature>
<feature type="sequence conflict" description="In Ref. 2; BAF83038." evidence="28" ref="2">
    <original>E</original>
    <variation>G</variation>
    <location>
        <position position="123"/>
    </location>
</feature>
<feature type="sequence conflict" description="In Ref. 4; CAA60121." evidence="28" ref="4">
    <original>R</original>
    <variation>V</variation>
    <location>
        <position position="152"/>
    </location>
</feature>
<feature type="sequence conflict" description="In Ref. 2; BAF83038." evidence="28" ref="2">
    <original>S</original>
    <variation>P</variation>
    <location>
        <position position="212"/>
    </location>
</feature>
<feature type="sequence conflict" description="In Ref. 4; CAA60121." evidence="28" ref="4">
    <original>GA</original>
    <variation>AL</variation>
    <location>
        <begin position="821"/>
        <end position="822"/>
    </location>
</feature>
<feature type="turn" evidence="40">
    <location>
        <begin position="41"/>
        <end position="44"/>
    </location>
</feature>
<feature type="strand" evidence="40">
    <location>
        <begin position="45"/>
        <end position="49"/>
    </location>
</feature>
<feature type="strand" evidence="40">
    <location>
        <begin position="52"/>
        <end position="54"/>
    </location>
</feature>
<feature type="strand" evidence="40">
    <location>
        <begin position="67"/>
        <end position="72"/>
    </location>
</feature>
<feature type="strand" evidence="40">
    <location>
        <begin position="88"/>
        <end position="90"/>
    </location>
</feature>
<feature type="turn" evidence="40">
    <location>
        <begin position="99"/>
        <end position="103"/>
    </location>
</feature>
<feature type="strand" evidence="40">
    <location>
        <begin position="104"/>
        <end position="106"/>
    </location>
</feature>
<feature type="strand" evidence="40">
    <location>
        <begin position="109"/>
        <end position="112"/>
    </location>
</feature>
<feature type="turn" evidence="40">
    <location>
        <begin position="115"/>
        <end position="118"/>
    </location>
</feature>
<feature type="turn" evidence="40">
    <location>
        <begin position="121"/>
        <end position="123"/>
    </location>
</feature>
<feature type="helix" evidence="40">
    <location>
        <begin position="137"/>
        <end position="141"/>
    </location>
</feature>
<feature type="strand" evidence="40">
    <location>
        <begin position="142"/>
        <end position="144"/>
    </location>
</feature>
<feature type="turn" evidence="40">
    <location>
        <begin position="146"/>
        <end position="148"/>
    </location>
</feature>
<feature type="strand" evidence="40">
    <location>
        <begin position="151"/>
        <end position="154"/>
    </location>
</feature>
<feature type="strand" evidence="40">
    <location>
        <begin position="171"/>
        <end position="174"/>
    </location>
</feature>
<feature type="strand" evidence="40">
    <location>
        <begin position="184"/>
        <end position="187"/>
    </location>
</feature>
<feature type="strand" evidence="40">
    <location>
        <begin position="191"/>
        <end position="221"/>
    </location>
</feature>
<feature type="strand" evidence="40">
    <location>
        <begin position="227"/>
        <end position="263"/>
    </location>
</feature>
<feature type="turn" evidence="40">
    <location>
        <begin position="267"/>
        <end position="269"/>
    </location>
</feature>
<feature type="helix" evidence="40">
    <location>
        <begin position="274"/>
        <end position="281"/>
    </location>
</feature>
<feature type="helix" evidence="40">
    <location>
        <begin position="289"/>
        <end position="299"/>
    </location>
</feature>
<feature type="strand" evidence="40">
    <location>
        <begin position="301"/>
        <end position="339"/>
    </location>
</feature>
<feature type="strand" evidence="40">
    <location>
        <begin position="352"/>
        <end position="373"/>
    </location>
</feature>
<feature type="strand" evidence="40">
    <location>
        <begin position="376"/>
        <end position="380"/>
    </location>
</feature>
<feature type="helix" evidence="40">
    <location>
        <begin position="382"/>
        <end position="388"/>
    </location>
</feature>
<feature type="helix" evidence="40">
    <location>
        <begin position="400"/>
        <end position="409"/>
    </location>
</feature>
<feature type="turn" evidence="40">
    <location>
        <begin position="410"/>
        <end position="412"/>
    </location>
</feature>
<feature type="strand" evidence="40">
    <location>
        <begin position="415"/>
        <end position="423"/>
    </location>
</feature>
<feature type="helix" evidence="40">
    <location>
        <begin position="424"/>
        <end position="427"/>
    </location>
</feature>
<feature type="helix" evidence="40">
    <location>
        <begin position="434"/>
        <end position="452"/>
    </location>
</feature>
<feature type="helix" evidence="40">
    <location>
        <begin position="454"/>
        <end position="456"/>
    </location>
</feature>
<feature type="strand" evidence="40">
    <location>
        <begin position="465"/>
        <end position="468"/>
    </location>
</feature>
<feature type="strand" evidence="40">
    <location>
        <begin position="470"/>
        <end position="476"/>
    </location>
</feature>
<feature type="strand" evidence="40">
    <location>
        <begin position="481"/>
        <end position="483"/>
    </location>
</feature>
<feature type="helix" evidence="40">
    <location>
        <begin position="513"/>
        <end position="515"/>
    </location>
</feature>
<feature type="strand" evidence="40">
    <location>
        <begin position="516"/>
        <end position="520"/>
    </location>
</feature>
<feature type="strand" evidence="40">
    <location>
        <begin position="539"/>
        <end position="544"/>
    </location>
</feature>
<feature type="helix" evidence="40">
    <location>
        <begin position="547"/>
        <end position="556"/>
    </location>
</feature>
<feature type="helix" evidence="40">
    <location>
        <begin position="558"/>
        <end position="560"/>
    </location>
</feature>
<feature type="strand" evidence="40">
    <location>
        <begin position="580"/>
        <end position="584"/>
    </location>
</feature>
<feature type="strand" evidence="40">
    <location>
        <begin position="594"/>
        <end position="599"/>
    </location>
</feature>
<feature type="strand" evidence="40">
    <location>
        <begin position="603"/>
        <end position="607"/>
    </location>
</feature>
<feature type="strand" evidence="40">
    <location>
        <begin position="610"/>
        <end position="613"/>
    </location>
</feature>
<feature type="strand" evidence="40">
    <location>
        <begin position="617"/>
        <end position="620"/>
    </location>
</feature>
<feature type="strand" evidence="40">
    <location>
        <begin position="625"/>
        <end position="631"/>
    </location>
</feature>
<feature type="strand" evidence="40">
    <location>
        <begin position="641"/>
        <end position="644"/>
    </location>
</feature>
<feature type="strand" evidence="40">
    <location>
        <begin position="654"/>
        <end position="658"/>
    </location>
</feature>
<feature type="strand" evidence="40">
    <location>
        <begin position="669"/>
        <end position="673"/>
    </location>
</feature>
<feature type="strand" evidence="40">
    <location>
        <begin position="675"/>
        <end position="677"/>
    </location>
</feature>
<feature type="strand" evidence="40">
    <location>
        <begin position="679"/>
        <end position="681"/>
    </location>
</feature>
<feature type="strand" evidence="39">
    <location>
        <begin position="706"/>
        <end position="709"/>
    </location>
</feature>
<feature type="strand" evidence="39">
    <location>
        <begin position="712"/>
        <end position="715"/>
    </location>
</feature>
<feature type="turn" evidence="40">
    <location>
        <begin position="718"/>
        <end position="723"/>
    </location>
</feature>
<feature type="strand" evidence="40">
    <location>
        <begin position="726"/>
        <end position="730"/>
    </location>
</feature>
<feature type="strand" evidence="40">
    <location>
        <begin position="732"/>
        <end position="735"/>
    </location>
</feature>
<feature type="strand" evidence="40">
    <location>
        <begin position="737"/>
        <end position="741"/>
    </location>
</feature>
<feature type="helix" evidence="40">
    <location>
        <begin position="742"/>
        <end position="750"/>
    </location>
</feature>
<feature type="strand" evidence="39">
    <location>
        <begin position="755"/>
        <end position="757"/>
    </location>
</feature>
<feature type="strand" evidence="39">
    <location>
        <begin position="766"/>
        <end position="769"/>
    </location>
</feature>
<feature type="strand" evidence="40">
    <location>
        <begin position="780"/>
        <end position="782"/>
    </location>
</feature>
<feature type="strand" evidence="40">
    <location>
        <begin position="787"/>
        <end position="791"/>
    </location>
</feature>
<feature type="helix" evidence="40">
    <location>
        <begin position="794"/>
        <end position="796"/>
    </location>
</feature>
<feature type="strand" evidence="40">
    <location>
        <begin position="803"/>
        <end position="808"/>
    </location>
</feature>
<feature type="strand" evidence="40">
    <location>
        <begin position="811"/>
        <end position="816"/>
    </location>
</feature>
<feature type="helix" evidence="40">
    <location>
        <begin position="817"/>
        <end position="825"/>
    </location>
</feature>
<feature type="strand" evidence="40">
    <location>
        <begin position="830"/>
        <end position="836"/>
    </location>
</feature>
<comment type="function">
    <text evidence="14 15 16 17 19 20">Component of the membrane attack complex (MAC), a multiprotein complex activated by the complement cascade, which inserts into a target cell membrane and forms a pore, leading to target cell membrane rupture and cell lysis (PubMed:22832194, PubMed:26841837, PubMed:27052168, PubMed:30552328, PubMed:3335508). The MAC is initiated by proteolytic cleavage of C5 into complement C5b in response to the classical, alternative, lectin and GZMK complement pathways (PubMed:22832194, PubMed:30552328, PubMed:3335508). The complement pathways consist in a cascade of proteins that leads to phagocytosis and breakdown of pathogens and signaling that strengthens the adaptive immune system (PubMed:22832194, PubMed:30552328, PubMed:3335508). C7 serves as a membrane anchor (PubMed:30552328). During MAC assembly, associates with C5b and C6 to form the C5b-7 complex, a key lipophilic precursor of the MAC complex, which associates with the outer leaflet and reduces the energy for membrane bending (PubMed:30552328, PubMed:32569291).</text>
</comment>
<comment type="activity regulation">
    <text evidence="21 22">Membrane attack complex (MAC) assembly is inhibited by CD59, thereby protecting self-cells from damage during complement activation (PubMed:36797260). MAC assembly is also inhibited by clusterin (CLU) chaperones that inhibit polymerization of C9 (PubMed:34667172).</text>
</comment>
<comment type="subunit">
    <text evidence="14 15 16 17 18 19 20">Monomer or dimer; as a C5b-7 complex it can also form multimeric rosettes (PubMed:22832194, PubMed:30552328). Component of the membrane attack complex (MAC), composed of complement C5b, C6, C7, C8A, C8B, C8G and multiple copies of the pore-forming subunit C9 (PubMed:22832194, PubMed:26841837, PubMed:27052168, PubMed:30552328, PubMed:31061395, PubMed:32569291, PubMed:3335508).</text>
</comment>
<comment type="subcellular location">
    <subcellularLocation>
        <location evidence="20">Secreted</location>
    </subcellularLocation>
    <subcellularLocation>
        <location evidence="17 18 19">Target cell membrane</location>
    </subcellularLocation>
    <text evidence="17 18 20">Secreted as soluble protein (PubMed:3335508). Inserts into the cell membrane of target cells (PubMed:30552328, PubMed:31061395).</text>
</comment>
<comment type="PTM">
    <text evidence="6 8 9 10 13">C-, N- and O-glycosylated. O-glycosylated with core 1 or possibly core 8 glycans.</text>
</comment>
<comment type="disease" evidence="24 25 26">
    <disease id="DI-01382">
        <name>Complement component 7 deficiency</name>
        <acronym>C7D</acronym>
        <description>A rare defect of the complement classical pathway associated with susceptibility to severe recurrent infections, predominantly by Neisseria gonorrhoeae or Neisseria meningitidis.</description>
        <dbReference type="MIM" id="610102"/>
    </disease>
    <text>Disease susceptibility is associated with variants affecting the gene represented in this entry.</text>
</comment>
<comment type="similarity">
    <text evidence="28">Belongs to the complement C6/C7/C8/C9 family.</text>
</comment>
<comment type="online information" name="C7">
    <link uri="https://databases.lovd.nl/shared/genes/C7"/>
    <text>complement component 7</text>
</comment>
<reference key="1">
    <citation type="journal article" date="1988" name="J. Biol. Chem.">
        <title>The structure of human complement component C7 and the C5b-7 complex.</title>
        <authorList>
            <person name="Discipio R.G."/>
            <person name="Chakravari D.N."/>
            <person name="Mueller-Eberhard H.J."/>
            <person name="Fey G.H."/>
        </authorList>
    </citation>
    <scope>NUCLEOTIDE SEQUENCE [MRNA]</scope>
    <scope>PARTIAL PROTEIN SEQUENCE</scope>
    <scope>FUNCTION</scope>
    <scope>VARIANT PRO-587</scope>
</reference>
<reference key="2">
    <citation type="journal article" date="2004" name="Nat. Genet.">
        <title>Complete sequencing and characterization of 21,243 full-length human cDNAs.</title>
        <authorList>
            <person name="Ota T."/>
            <person name="Suzuki Y."/>
            <person name="Nishikawa T."/>
            <person name="Otsuki T."/>
            <person name="Sugiyama T."/>
            <person name="Irie R."/>
            <person name="Wakamatsu A."/>
            <person name="Hayashi K."/>
            <person name="Sato H."/>
            <person name="Nagai K."/>
            <person name="Kimura K."/>
            <person name="Makita H."/>
            <person name="Sekine M."/>
            <person name="Obayashi M."/>
            <person name="Nishi T."/>
            <person name="Shibahara T."/>
            <person name="Tanaka T."/>
            <person name="Ishii S."/>
            <person name="Yamamoto J."/>
            <person name="Saito K."/>
            <person name="Kawai Y."/>
            <person name="Isono Y."/>
            <person name="Nakamura Y."/>
            <person name="Nagahari K."/>
            <person name="Murakami K."/>
            <person name="Yasuda T."/>
            <person name="Iwayanagi T."/>
            <person name="Wagatsuma M."/>
            <person name="Shiratori A."/>
            <person name="Sudo H."/>
            <person name="Hosoiri T."/>
            <person name="Kaku Y."/>
            <person name="Kodaira H."/>
            <person name="Kondo H."/>
            <person name="Sugawara M."/>
            <person name="Takahashi M."/>
            <person name="Kanda K."/>
            <person name="Yokoi T."/>
            <person name="Furuya T."/>
            <person name="Kikkawa E."/>
            <person name="Omura Y."/>
            <person name="Abe K."/>
            <person name="Kamihara K."/>
            <person name="Katsuta N."/>
            <person name="Sato K."/>
            <person name="Tanikawa M."/>
            <person name="Yamazaki M."/>
            <person name="Ninomiya K."/>
            <person name="Ishibashi T."/>
            <person name="Yamashita H."/>
            <person name="Murakawa K."/>
            <person name="Fujimori K."/>
            <person name="Tanai H."/>
            <person name="Kimata M."/>
            <person name="Watanabe M."/>
            <person name="Hiraoka S."/>
            <person name="Chiba Y."/>
            <person name="Ishida S."/>
            <person name="Ono Y."/>
            <person name="Takiguchi S."/>
            <person name="Watanabe S."/>
            <person name="Yosida M."/>
            <person name="Hotuta T."/>
            <person name="Kusano J."/>
            <person name="Kanehori K."/>
            <person name="Takahashi-Fujii A."/>
            <person name="Hara H."/>
            <person name="Tanase T.-O."/>
            <person name="Nomura Y."/>
            <person name="Togiya S."/>
            <person name="Komai F."/>
            <person name="Hara R."/>
            <person name="Takeuchi K."/>
            <person name="Arita M."/>
            <person name="Imose N."/>
            <person name="Musashino K."/>
            <person name="Yuuki H."/>
            <person name="Oshima A."/>
            <person name="Sasaki N."/>
            <person name="Aotsuka S."/>
            <person name="Yoshikawa Y."/>
            <person name="Matsunawa H."/>
            <person name="Ichihara T."/>
            <person name="Shiohata N."/>
            <person name="Sano S."/>
            <person name="Moriya S."/>
            <person name="Momiyama H."/>
            <person name="Satoh N."/>
            <person name="Takami S."/>
            <person name="Terashima Y."/>
            <person name="Suzuki O."/>
            <person name="Nakagawa S."/>
            <person name="Senoh A."/>
            <person name="Mizoguchi H."/>
            <person name="Goto Y."/>
            <person name="Shimizu F."/>
            <person name="Wakebe H."/>
            <person name="Hishigaki H."/>
            <person name="Watanabe T."/>
            <person name="Sugiyama A."/>
            <person name="Takemoto M."/>
            <person name="Kawakami B."/>
            <person name="Yamazaki M."/>
            <person name="Watanabe K."/>
            <person name="Kumagai A."/>
            <person name="Itakura S."/>
            <person name="Fukuzumi Y."/>
            <person name="Fujimori Y."/>
            <person name="Komiyama M."/>
            <person name="Tashiro H."/>
            <person name="Tanigami A."/>
            <person name="Fujiwara T."/>
            <person name="Ono T."/>
            <person name="Yamada K."/>
            <person name="Fujii Y."/>
            <person name="Ozaki K."/>
            <person name="Hirao M."/>
            <person name="Ohmori Y."/>
            <person name="Kawabata A."/>
            <person name="Hikiji T."/>
            <person name="Kobatake N."/>
            <person name="Inagaki H."/>
            <person name="Ikema Y."/>
            <person name="Okamoto S."/>
            <person name="Okitani R."/>
            <person name="Kawakami T."/>
            <person name="Noguchi S."/>
            <person name="Itoh T."/>
            <person name="Shigeta K."/>
            <person name="Senba T."/>
            <person name="Matsumura K."/>
            <person name="Nakajima Y."/>
            <person name="Mizuno T."/>
            <person name="Morinaga M."/>
            <person name="Sasaki M."/>
            <person name="Togashi T."/>
            <person name="Oyama M."/>
            <person name="Hata H."/>
            <person name="Watanabe M."/>
            <person name="Komatsu T."/>
            <person name="Mizushima-Sugano J."/>
            <person name="Satoh T."/>
            <person name="Shirai Y."/>
            <person name="Takahashi Y."/>
            <person name="Nakagawa K."/>
            <person name="Okumura K."/>
            <person name="Nagase T."/>
            <person name="Nomura N."/>
            <person name="Kikuchi H."/>
            <person name="Masuho Y."/>
            <person name="Yamashita R."/>
            <person name="Nakai K."/>
            <person name="Yada T."/>
            <person name="Nakamura Y."/>
            <person name="Ohara O."/>
            <person name="Isogai T."/>
            <person name="Sugano S."/>
        </authorList>
    </citation>
    <scope>NUCLEOTIDE SEQUENCE [LARGE SCALE MRNA]</scope>
    <scope>VARIANT HIS-222</scope>
    <source>
        <tissue>Tongue</tissue>
    </source>
</reference>
<reference key="3">
    <citation type="journal article" date="2004" name="Genome Res.">
        <title>The status, quality, and expansion of the NIH full-length cDNA project: the Mammalian Gene Collection (MGC).</title>
        <authorList>
            <consortium name="The MGC Project Team"/>
        </authorList>
    </citation>
    <scope>NUCLEOTIDE SEQUENCE [LARGE SCALE MRNA]</scope>
    <source>
        <tissue>PNS</tissue>
    </source>
</reference>
<reference key="4">
    <citation type="journal article" date="1995" name="J. Immunol.">
        <title>Structure of the human C7 gene and comparison with the C6, C8A, C8B and C9 genes.</title>
        <authorList>
            <person name="Hobart M.J."/>
            <person name="Fernie B.A."/>
            <person name="DiScipio R.G."/>
        </authorList>
    </citation>
    <scope>NUCLEOTIDE SEQUENCE [GENOMIC DNA] OF 3-822</scope>
    <scope>VARIANT THR-389</scope>
</reference>
<reference key="5">
    <citation type="journal article" date="1999" name="J. Biol. Chem.">
        <title>The four terminal components of the complement system are C-mannosylated on multiple tryptophan residues.</title>
        <authorList>
            <person name="Hofsteenge J."/>
            <person name="Blommers M."/>
            <person name="Hess D."/>
            <person name="Furmanek A."/>
            <person name="Miroshnichenko O."/>
        </authorList>
    </citation>
    <scope>GLYCOSYLATION AT TRP-36; TRP-503; TRP-506 AND TRP-509</scope>
</reference>
<reference key="6">
    <citation type="journal article" date="2004" name="Proteomics">
        <title>Screening for N-glycosylated proteins by liquid chromatography mass spectrometry.</title>
        <authorList>
            <person name="Bunkenborg J."/>
            <person name="Pilch B.J."/>
            <person name="Podtelejnikov A.V."/>
            <person name="Wisniewski J.R."/>
        </authorList>
    </citation>
    <scope>GLYCOSYLATION [LARGE SCALE ANALYSIS] AT ASN-202</scope>
    <source>
        <tissue>Plasma</tissue>
    </source>
</reference>
<reference key="7">
    <citation type="journal article" date="2005" name="J. Proteome Res.">
        <title>Human plasma N-glycoproteome analysis by immunoaffinity subtraction, hydrazide chemistry, and mass spectrometry.</title>
        <authorList>
            <person name="Liu T."/>
            <person name="Qian W.-J."/>
            <person name="Gritsenko M.A."/>
            <person name="Camp D.G. II"/>
            <person name="Monroe M.E."/>
            <person name="Moore R.J."/>
            <person name="Smith R.D."/>
        </authorList>
    </citation>
    <scope>GLYCOSYLATION [LARGE SCALE ANALYSIS] AT ASN-202 AND ASN-754</scope>
    <source>
        <tissue>Plasma</tissue>
    </source>
</reference>
<reference key="8">
    <citation type="journal article" date="2009" name="Mol. Cell. Proteomics">
        <title>A strategy for precise and large scale identification of core fucosylated glycoproteins.</title>
        <authorList>
            <person name="Jia W."/>
            <person name="Lu Z."/>
            <person name="Fu Y."/>
            <person name="Wang H.P."/>
            <person name="Wang L.H."/>
            <person name="Chi H."/>
            <person name="Yuan Z.F."/>
            <person name="Zheng Z.B."/>
            <person name="Song L.N."/>
            <person name="Han H.H."/>
            <person name="Liang Y.M."/>
            <person name="Wang J.L."/>
            <person name="Cai Y."/>
            <person name="Zhang Y.K."/>
            <person name="Deng Y.L."/>
            <person name="Ying W.T."/>
            <person name="He S.M."/>
            <person name="Qian X.H."/>
        </authorList>
    </citation>
    <scope>GLYCOSYLATION AT ASN-754</scope>
</reference>
<reference key="9">
    <citation type="journal article" date="2012" name="Cell Rep.">
        <title>Assembly and regulation of the membrane attack complex based on structures of C5b6 and sC5b9.</title>
        <authorList>
            <person name="Hadders M.A."/>
            <person name="Bubeck D."/>
            <person name="Roversi P."/>
            <person name="Hakobyan S."/>
            <person name="Forneris F."/>
            <person name="Morgan B.P."/>
            <person name="Pangburn M.K."/>
            <person name="Llorca O."/>
            <person name="Lea S.M."/>
            <person name="Gros P."/>
        </authorList>
    </citation>
    <scope>FUNCTION</scope>
    <scope>SUBUNIT</scope>
</reference>
<reference key="10">
    <citation type="journal article" date="2012" name="Mol. Cell. Proteomics">
        <title>Human urinary glycoproteomics; attachment site specific analysis of N- and O-linked glycosylations by CID and ECD.</title>
        <authorList>
            <person name="Halim A."/>
            <person name="Nilsson J."/>
            <person name="Ruetschi U."/>
            <person name="Hesse C."/>
            <person name="Larson G."/>
        </authorList>
    </citation>
    <scope>GLYCOSYLATION AT THR-696</scope>
    <scope>STRUCTURE OF CARBOHYDRATES</scope>
    <scope>IDENTIFICATION BY MASS SPECTROMETRY</scope>
</reference>
<reference key="11">
    <citation type="journal article" date="2016" name="Cell Rep.">
        <title>Heterogeneous MAC initiator and pore structures in a lipid bilayer by phase-plate cryo-electron tomography.</title>
        <authorList>
            <person name="Sharp T.H."/>
            <person name="Koster A.J."/>
            <person name="Gros P."/>
        </authorList>
    </citation>
    <scope>FUNCTION</scope>
    <scope>SUBUNIT</scope>
</reference>
<reference key="12">
    <citation type="journal article" date="2016" name="Nat. Commun.">
        <title>Structural basis of complement membrane attack complex formation.</title>
        <authorList>
            <person name="Serna M."/>
            <person name="Giles J.L."/>
            <person name="Morgan B.P."/>
            <person name="Bubeck D."/>
        </authorList>
    </citation>
    <scope>FUNCTION</scope>
    <scope>SUBUNIT</scope>
</reference>
<reference key="13">
    <citation type="journal article" date="2019" name="Nat. Commun.">
        <title>Single-molecule kinetics of pore assembly by the membrane attack complex.</title>
        <authorList>
            <person name="Parsons E.S."/>
            <person name="Stanley G.J."/>
            <person name="Pyne A.L.B."/>
            <person name="Hodel A.W."/>
            <person name="Nievergelt A.P."/>
            <person name="Menny A."/>
            <person name="Yon A.R."/>
            <person name="Rowley A."/>
            <person name="Richter R.P."/>
            <person name="Fantner G.E."/>
            <person name="Bubeck D."/>
            <person name="Hoogenboom B.W."/>
        </authorList>
    </citation>
    <scope>FUNCTION</scope>
    <scope>SUBUNIT</scope>
</reference>
<reference key="14">
    <citation type="journal article" date="2020" name="PLoS Pathog.">
        <title>Bacterial killing by complement requires direct anchoring of membrane attack complex precursor C5b-7.</title>
        <authorList>
            <person name="Doorduijn D.J."/>
            <person name="Bardoel B.W."/>
            <person name="Heesterbeek D.A.C."/>
            <person name="Ruyken M."/>
            <person name="Benn G."/>
            <person name="Parsons E.S."/>
            <person name="Hoogenboom B.W."/>
            <person name="Rooijakkers S.H.M."/>
        </authorList>
    </citation>
    <scope>FUNCTION</scope>
    <scope>SUBUNIT</scope>
    <scope>SUBCELLULAR LOCATION</scope>
</reference>
<reference evidence="31" key="15">
    <citation type="journal article" date="2009" name="J. Biol. Chem.">
        <title>Solution structure of factor I-like modules from complement C7 reveals a pair of follistatin domains in compact pseudosymmetric arrangement.</title>
        <authorList>
            <person name="Phelan M.M."/>
            <person name="Thai C.-T."/>
            <person name="Soares D.C."/>
            <person name="Ogata R.T."/>
            <person name="Barlow P.N."/>
            <person name="Bramham J."/>
        </authorList>
    </citation>
    <scope>STRUCTURE BY NMR OF 693-843</scope>
    <scope>DISULFIDE BONDS</scope>
</reference>
<reference evidence="32 33" key="16">
    <citation type="journal article" date="2018" name="Nat. Commun.">
        <title>CryoEM reveals how the complement membrane attack complex ruptures lipid bilayers.</title>
        <authorList>
            <person name="Menny A."/>
            <person name="Serna M."/>
            <person name="Boyd C.M."/>
            <person name="Gardner S."/>
            <person name="Joseph A.P."/>
            <person name="Morgan B.P."/>
            <person name="Topf M."/>
            <person name="Brooks N.J."/>
            <person name="Bubeck D."/>
        </authorList>
    </citation>
    <scope>STRUCTURE BY ELECTRON MICROSCOPY (5.60 ANGSTROMS) OF 23-843 OF MEMBRANE ATTACK COMPLEX</scope>
    <scope>FUNCTION</scope>
    <scope>SUBCELLULAR LOCATION</scope>
    <scope>SUBUNIT</scope>
    <scope>DISULFIDE BONDS</scope>
</reference>
<reference evidence="34 35" key="17">
    <citation type="journal article" date="2021" name="Nat. Commun.">
        <title>Structural basis of soluble membrane attack complex packaging for clearance.</title>
        <authorList>
            <person name="Menny A."/>
            <person name="Lukassen M.V."/>
            <person name="Couves E.C."/>
            <person name="Franc V."/>
            <person name="Heck A.J.R."/>
            <person name="Bubeck D."/>
        </authorList>
    </citation>
    <scope>STRUCTURE BY ELECTRON MICROSCOPY (3.27 ANGSTROMS) OF 23-843 OF MEMBRANE ATTACK COMPLEX</scope>
    <scope>ACTIVITY REGULATION</scope>
</reference>
<reference evidence="36 37 38" key="18">
    <citation type="journal article" date="2023" name="Nat. Commun.">
        <title>Structural basis for membrane attack complex inhibition by CD59.</title>
        <authorList>
            <person name="Couves E.C."/>
            <person name="Gardner S."/>
            <person name="Voisin T.B."/>
            <person name="Bickel J.K."/>
            <person name="Stansfeld P.J."/>
            <person name="Tate E.W."/>
            <person name="Bubeck D."/>
        </authorList>
    </citation>
    <scope>STRUCTURE BY ELECTRON MICROSCOPY (3.00 ANGSTROMS) IN COMPLEX WITH THE MEMBRANE ATTACK COMPLEX</scope>
    <scope>ACTIVITY REGULATION</scope>
    <scope>DISULFIDE BONDS</scope>
</reference>
<reference key="19">
    <citation type="journal article" date="1996" name="J. Immunol.">
        <title>Molecular bases of combined subtotal deficiencies of C6 and C7: their effects in combination with other C6 and C7 deficiencies.</title>
        <authorList>
            <person name="Fernie B.A."/>
            <person name="Wurzner R."/>
            <person name="Orren A."/>
            <person name="Morgan B.P."/>
            <person name="Potter P.C."/>
            <person name="Platonov A.E."/>
            <person name="Vershinina I.V."/>
            <person name="Shipulin G.A."/>
            <person name="Lachmann P.J."/>
            <person name="Hobart M.J."/>
        </authorList>
    </citation>
    <scope>VARIANT C7D SER-521</scope>
</reference>
<reference key="20">
    <citation type="journal article" date="1997" name="J. Immunol.">
        <title>Molecular bases of C7 deficiency: three different defects.</title>
        <authorList>
            <person name="Fernie B.A."/>
            <person name="Orren A."/>
            <person name="Sheehan G."/>
            <person name="Schlesinger M."/>
            <person name="Hobart M.J."/>
        </authorList>
    </citation>
    <scope>VARIANT C7D ARG-379</scope>
</reference>
<reference key="21">
    <citation type="journal article" date="1998" name="Hum. Genet.">
        <title>Complement C7 deficiency: seven further molecular defects and their associated marker haplotypes.</title>
        <authorList>
            <person name="Fernie B.A."/>
            <person name="Hobart M.J."/>
        </authorList>
    </citation>
    <scope>VARIANTS C7D GLN-220; GLN-682 AND HIS-687</scope>
</reference>
<reference key="22">
    <citation type="journal article" date="2011" name="J. Mol. Cell Biol.">
        <title>Quantitative detection of single amino acid polymorphisms by targeted proteomics.</title>
        <authorList>
            <person name="Su Z.D."/>
            <person name="Sun L."/>
            <person name="Yu D.X."/>
            <person name="Li R.X."/>
            <person name="Li H.X."/>
            <person name="Yu Z.J."/>
            <person name="Sheng Q.H."/>
            <person name="Lin X."/>
            <person name="Zeng R."/>
            <person name="Wu J.R."/>
        </authorList>
    </citation>
    <scope>VARIANTS THR-389 AND PRO-587</scope>
    <scope>IDENTIFICATION BY MASS SPECTROMETRY</scope>
</reference>
<gene>
    <name evidence="27 30" type="primary">C7</name>
</gene>
<proteinExistence type="evidence at protein level"/>